<sequence length="202" mass="21997">MQSLYVEGNSRMHRLSPRAKLLSLTAFAILLFISHNLLLLSGAVLVAAVLYGTVGLPIGEALLRLRPIFLTIAVVALFNLIFNPWQAALVPVLRLTALMLLAASVTATTTITEFIDEVTALARPLERTGRVQADDIGLALGLVLRFVPEIVNRYQAIREAHKARGLKVRPTSLLAPLIILTLKDADNVAAAIDARRIRRHGS</sequence>
<organism>
    <name type="scientific">Rhizobium etli (strain ATCC 51251 / DSM 11541 / JCM 21823 / NBRC 15573 / CFN 42)</name>
    <dbReference type="NCBI Taxonomy" id="347834"/>
    <lineage>
        <taxon>Bacteria</taxon>
        <taxon>Pseudomonadati</taxon>
        <taxon>Pseudomonadota</taxon>
        <taxon>Alphaproteobacteria</taxon>
        <taxon>Hyphomicrobiales</taxon>
        <taxon>Rhizobiaceae</taxon>
        <taxon>Rhizobium/Agrobacterium group</taxon>
        <taxon>Rhizobium</taxon>
    </lineage>
</organism>
<reference key="1">
    <citation type="journal article" date="2005" name="FEMS Microbiol. Lett.">
        <title>The Rhizobium etli bioMNY operon is involved in biotin transport.</title>
        <authorList>
            <person name="Guillen-Navarro K."/>
            <person name="Araiza G."/>
            <person name="Garcia-de los Santos A."/>
            <person name="Mora Y."/>
            <person name="Dunn M.F."/>
        </authorList>
    </citation>
    <scope>NUCLEOTIDE SEQUENCE [GENOMIC DNA]</scope>
    <scope>FUNCTION</scope>
    <scope>SUBUNIT</scope>
    <scope>INDUCTION</scope>
    <source>
        <strain>CE3</strain>
    </source>
</reference>
<reference key="2">
    <citation type="journal article" date="2006" name="Proc. Natl. Acad. Sci. U.S.A.">
        <title>The partitioned Rhizobium etli genome: genetic and metabolic redundancy in seven interacting replicons.</title>
        <authorList>
            <person name="Gonzalez V."/>
            <person name="Santamaria R.I."/>
            <person name="Bustos P."/>
            <person name="Hernandez-Gonzalez I."/>
            <person name="Medrano-Soto A."/>
            <person name="Moreno-Hagelsieb G."/>
            <person name="Janga S.C."/>
            <person name="Ramirez M.A."/>
            <person name="Jimenez-Jacinto V."/>
            <person name="Collado-Vides J."/>
            <person name="Davila G."/>
        </authorList>
    </citation>
    <scope>NUCLEOTIDE SEQUENCE [LARGE SCALE GENOMIC DNA]</scope>
    <source>
        <strain>ATCC 51251 / DSM 11541 / JCM 21823 / NBRC 15573 / CFN 42</strain>
    </source>
</reference>
<proteinExistence type="evidence at protein level"/>
<dbReference type="EMBL" id="AY644481">
    <property type="protein sequence ID" value="AAT52197.1"/>
    <property type="molecule type" value="Genomic_DNA"/>
</dbReference>
<dbReference type="EMBL" id="CP000133">
    <property type="protein sequence ID" value="ABC89740.1"/>
    <property type="molecule type" value="Genomic_DNA"/>
</dbReference>
<dbReference type="RefSeq" id="WP_011424276.1">
    <property type="nucleotide sequence ID" value="NC_007761.1"/>
</dbReference>
<dbReference type="SMR" id="Q2KBP6"/>
<dbReference type="TCDB" id="3.A.1.25.1">
    <property type="family name" value="the atp-binding cassette (abc) superfamily"/>
</dbReference>
<dbReference type="KEGG" id="ret:RHE_CH00929"/>
<dbReference type="eggNOG" id="COG0619">
    <property type="taxonomic scope" value="Bacteria"/>
</dbReference>
<dbReference type="HOGENOM" id="CLU_056469_4_2_5"/>
<dbReference type="OrthoDB" id="5868344at2"/>
<dbReference type="Proteomes" id="UP000001936">
    <property type="component" value="Chromosome"/>
</dbReference>
<dbReference type="GO" id="GO:0005886">
    <property type="term" value="C:plasma membrane"/>
    <property type="evidence" value="ECO:0007669"/>
    <property type="project" value="UniProtKB-SubCell"/>
</dbReference>
<dbReference type="CDD" id="cd16914">
    <property type="entry name" value="EcfT"/>
    <property type="match status" value="1"/>
</dbReference>
<dbReference type="InterPro" id="IPR003339">
    <property type="entry name" value="ABC/ECF_trnsptr_transmembrane"/>
</dbReference>
<dbReference type="PANTHER" id="PTHR33514">
    <property type="entry name" value="PROTEIN ABCI12, CHLOROPLASTIC"/>
    <property type="match status" value="1"/>
</dbReference>
<dbReference type="PANTHER" id="PTHR33514:SF13">
    <property type="entry name" value="PROTEIN ABCI12, CHLOROPLASTIC"/>
    <property type="match status" value="1"/>
</dbReference>
<dbReference type="Pfam" id="PF02361">
    <property type="entry name" value="CbiQ"/>
    <property type="match status" value="1"/>
</dbReference>
<accession>Q2KBP6</accession>
<accession>Q6GUB1</accession>
<feature type="chain" id="PRO_0000416409" description="Energy-coupling factor transporter transmembrane protein BioN">
    <location>
        <begin position="1"/>
        <end position="202"/>
    </location>
</feature>
<feature type="transmembrane region" description="Helical" evidence="1">
    <location>
        <begin position="21"/>
        <end position="40"/>
    </location>
</feature>
<feature type="transmembrane region" description="Helical" evidence="1">
    <location>
        <begin position="44"/>
        <end position="63"/>
    </location>
</feature>
<feature type="transmembrane region" description="Helical" evidence="1">
    <location>
        <begin position="68"/>
        <end position="90"/>
    </location>
</feature>
<name>BION_RHIEC</name>
<keyword id="KW-0997">Cell inner membrane</keyword>
<keyword id="KW-1003">Cell membrane</keyword>
<keyword id="KW-0472">Membrane</keyword>
<keyword id="KW-1185">Reference proteome</keyword>
<keyword id="KW-0812">Transmembrane</keyword>
<keyword id="KW-1133">Transmembrane helix</keyword>
<keyword id="KW-0813">Transport</keyword>
<evidence type="ECO:0000255" key="1"/>
<evidence type="ECO:0000269" key="2">
    <source>
    </source>
</evidence>
<evidence type="ECO:0000305" key="3"/>
<evidence type="ECO:0000305" key="4">
    <source>
    </source>
</evidence>
<gene>
    <name type="primary">bioN</name>
    <name type="ordered locus">RHE_CH00929</name>
</gene>
<comment type="function">
    <text evidence="4">Involved in biotin uptake.</text>
</comment>
<comment type="subunit">
    <text evidence="4">Part of a biotin transporter complex composed of BioM, BioN and BioY.</text>
</comment>
<comment type="subcellular location">
    <subcellularLocation>
        <location evidence="3">Cell inner membrane</location>
        <topology evidence="3">Multi-pass membrane protein</topology>
    </subcellularLocation>
</comment>
<comment type="induction">
    <text evidence="2">Expression is repressed by biotin.</text>
</comment>
<comment type="similarity">
    <text evidence="3">Belongs to the CbiQ family.</text>
</comment>
<protein>
    <recommendedName>
        <fullName>Energy-coupling factor transporter transmembrane protein BioN</fullName>
        <shortName>ECF transporter T component BioN</shortName>
    </recommendedName>
</protein>